<feature type="chain" id="PRO_0000448696" description="RNA-binding protein, mRNA-processing factor 2a">
    <location>
        <begin position="1"/>
        <end position="199"/>
    </location>
</feature>
<feature type="domain" description="RRM" evidence="5">
    <location>
        <begin position="20"/>
        <end position="97"/>
    </location>
</feature>
<name>RBP2A_DANRE</name>
<reference evidence="13" key="1">
    <citation type="journal article" date="2013" name="Nature">
        <title>The zebrafish reference genome sequence and its relationship to the human genome.</title>
        <authorList>
            <person name="Howe K."/>
            <person name="Clark M.D."/>
            <person name="Torroja C.F."/>
            <person name="Torrance J."/>
            <person name="Berthelot C."/>
            <person name="Muffato M."/>
            <person name="Collins J.E."/>
            <person name="Humphray S."/>
            <person name="McLaren K."/>
            <person name="Matthews L."/>
            <person name="McLaren S."/>
            <person name="Sealy I."/>
            <person name="Caccamo M."/>
            <person name="Churcher C."/>
            <person name="Scott C."/>
            <person name="Barrett J.C."/>
            <person name="Koch R."/>
            <person name="Rauch G.J."/>
            <person name="White S."/>
            <person name="Chow W."/>
            <person name="Kilian B."/>
            <person name="Quintais L.T."/>
            <person name="Guerra-Assuncao J.A."/>
            <person name="Zhou Y."/>
            <person name="Gu Y."/>
            <person name="Yen J."/>
            <person name="Vogel J.H."/>
            <person name="Eyre T."/>
            <person name="Redmond S."/>
            <person name="Banerjee R."/>
            <person name="Chi J."/>
            <person name="Fu B."/>
            <person name="Langley E."/>
            <person name="Maguire S.F."/>
            <person name="Laird G.K."/>
            <person name="Lloyd D."/>
            <person name="Kenyon E."/>
            <person name="Donaldson S."/>
            <person name="Sehra H."/>
            <person name="Almeida-King J."/>
            <person name="Loveland J."/>
            <person name="Trevanion S."/>
            <person name="Jones M."/>
            <person name="Quail M."/>
            <person name="Willey D."/>
            <person name="Hunt A."/>
            <person name="Burton J."/>
            <person name="Sims S."/>
            <person name="McLay K."/>
            <person name="Plumb B."/>
            <person name="Davis J."/>
            <person name="Clee C."/>
            <person name="Oliver K."/>
            <person name="Clark R."/>
            <person name="Riddle C."/>
            <person name="Elliot D."/>
            <person name="Threadgold G."/>
            <person name="Harden G."/>
            <person name="Ware D."/>
            <person name="Begum S."/>
            <person name="Mortimore B."/>
            <person name="Kerry G."/>
            <person name="Heath P."/>
            <person name="Phillimore B."/>
            <person name="Tracey A."/>
            <person name="Corby N."/>
            <person name="Dunn M."/>
            <person name="Johnson C."/>
            <person name="Wood J."/>
            <person name="Clark S."/>
            <person name="Pelan S."/>
            <person name="Griffiths G."/>
            <person name="Smith M."/>
            <person name="Glithero R."/>
            <person name="Howden P."/>
            <person name="Barker N."/>
            <person name="Lloyd C."/>
            <person name="Stevens C."/>
            <person name="Harley J."/>
            <person name="Holt K."/>
            <person name="Panagiotidis G."/>
            <person name="Lovell J."/>
            <person name="Beasley H."/>
            <person name="Henderson C."/>
            <person name="Gordon D."/>
            <person name="Auger K."/>
            <person name="Wright D."/>
            <person name="Collins J."/>
            <person name="Raisen C."/>
            <person name="Dyer L."/>
            <person name="Leung K."/>
            <person name="Robertson L."/>
            <person name="Ambridge K."/>
            <person name="Leongamornlert D."/>
            <person name="McGuire S."/>
            <person name="Gilderthorp R."/>
            <person name="Griffiths C."/>
            <person name="Manthravadi D."/>
            <person name="Nichol S."/>
            <person name="Barker G."/>
            <person name="Whitehead S."/>
            <person name="Kay M."/>
            <person name="Brown J."/>
            <person name="Murnane C."/>
            <person name="Gray E."/>
            <person name="Humphries M."/>
            <person name="Sycamore N."/>
            <person name="Barker D."/>
            <person name="Saunders D."/>
            <person name="Wallis J."/>
            <person name="Babbage A."/>
            <person name="Hammond S."/>
            <person name="Mashreghi-Mohammadi M."/>
            <person name="Barr L."/>
            <person name="Martin S."/>
            <person name="Wray P."/>
            <person name="Ellington A."/>
            <person name="Matthews N."/>
            <person name="Ellwood M."/>
            <person name="Woodmansey R."/>
            <person name="Clark G."/>
            <person name="Cooper J."/>
            <person name="Tromans A."/>
            <person name="Grafham D."/>
            <person name="Skuce C."/>
            <person name="Pandian R."/>
            <person name="Andrews R."/>
            <person name="Harrison E."/>
            <person name="Kimberley A."/>
            <person name="Garnett J."/>
            <person name="Fosker N."/>
            <person name="Hall R."/>
            <person name="Garner P."/>
            <person name="Kelly D."/>
            <person name="Bird C."/>
            <person name="Palmer S."/>
            <person name="Gehring I."/>
            <person name="Berger A."/>
            <person name="Dooley C.M."/>
            <person name="Ersan-Urun Z."/>
            <person name="Eser C."/>
            <person name="Geiger H."/>
            <person name="Geisler M."/>
            <person name="Karotki L."/>
            <person name="Kirn A."/>
            <person name="Konantz J."/>
            <person name="Konantz M."/>
            <person name="Oberlander M."/>
            <person name="Rudolph-Geiger S."/>
            <person name="Teucke M."/>
            <person name="Lanz C."/>
            <person name="Raddatz G."/>
            <person name="Osoegawa K."/>
            <person name="Zhu B."/>
            <person name="Rapp A."/>
            <person name="Widaa S."/>
            <person name="Langford C."/>
            <person name="Yang F."/>
            <person name="Schuster S.C."/>
            <person name="Carter N.P."/>
            <person name="Harrow J."/>
            <person name="Ning Z."/>
            <person name="Herrero J."/>
            <person name="Searle S.M."/>
            <person name="Enright A."/>
            <person name="Geisler R."/>
            <person name="Plasterk R.H."/>
            <person name="Lee C."/>
            <person name="Westerfield M."/>
            <person name="de Jong P.J."/>
            <person name="Zon L.I."/>
            <person name="Postlethwait J.H."/>
            <person name="Nusslein-Volhard C."/>
            <person name="Hubbard T.J."/>
            <person name="Roest Crollius H."/>
            <person name="Rogers J."/>
            <person name="Stemple D.L."/>
        </authorList>
    </citation>
    <scope>NUCLEOTIDE SEQUENCE [LARGE SCALE GENOMIC DNA]</scope>
    <source>
        <strain evidence="13">Tuebingen</strain>
    </source>
</reference>
<reference evidence="12" key="2">
    <citation type="submission" date="2004-07" db="EMBL/GenBank/DDBJ databases">
        <authorList>
            <consortium name="NIH - Zebrafish Gene Collection (ZGC) project"/>
        </authorList>
    </citation>
    <scope>NUCLEOTIDE SEQUENCE [LARGE SCALE MRNA]</scope>
    <source>
        <tissue evidence="12">Eye</tissue>
    </source>
</reference>
<reference key="3">
    <citation type="journal article" date="2008" name="Dev. Biol.">
        <title>Bucky ball functions in Balbiani body assembly and animal-vegetal polarity in the oocyte and follicle cell layer in zebrafish.</title>
        <authorList>
            <person name="Marlow F.L."/>
            <person name="Mullins M.C."/>
        </authorList>
    </citation>
    <scope>FUNCTION</scope>
    <scope>SUBCELLULAR LOCATION</scope>
</reference>
<reference key="4">
    <citation type="journal article" date="2013" name="J. Neurosci.">
        <title>RNA-binding protein Hermes/RBPMS inversely affects synapse density and axon arbor formation in retinal ganglion cells in vivo.</title>
        <authorList>
            <person name="Hoernberg H."/>
            <person name="Wollerton-van Horck F."/>
            <person name="Maurus D."/>
            <person name="Zwart M."/>
            <person name="Svoboda H."/>
            <person name="Harris W.A."/>
            <person name="Holt C.E."/>
        </authorList>
    </citation>
    <scope>DEVELOPMENTAL STAGE</scope>
</reference>
<reference key="5">
    <citation type="journal article" date="2014" name="Development">
        <title>Oocyte polarity requires a Bucky ball-dependent feedback amplification loop.</title>
        <authorList>
            <person name="Heim A.E."/>
            <person name="Hartung O."/>
            <person name="Rothhaemel S."/>
            <person name="Ferreira E."/>
            <person name="Jenny A."/>
            <person name="Marlow F.L."/>
        </authorList>
    </citation>
    <scope>FUNCTION</scope>
    <scope>INTERACTION WITH BUC</scope>
</reference>
<reference key="6">
    <citation type="journal article" date="2016" name="J. Neurosci.">
        <title>Hermes Regulates Axon Sorting in the Optic Tract by Post-Transcriptional Regulation of Neuropilin 1.</title>
        <authorList>
            <person name="Hoernberg H."/>
            <person name="Cioni J.M."/>
            <person name="Harris W.A."/>
            <person name="Holt C.E."/>
        </authorList>
    </citation>
    <scope>FUNCTION</scope>
    <scope>DISRUPTION PHENOTYPE</scope>
</reference>
<keyword id="KW-0963">Cytoplasm</keyword>
<keyword id="KW-0539">Nucleus</keyword>
<keyword id="KW-1185">Reference proteome</keyword>
<keyword id="KW-0694">RNA-binding</keyword>
<organism evidence="12">
    <name type="scientific">Danio rerio</name>
    <name type="common">Zebrafish</name>
    <name type="synonym">Brachydanio rerio</name>
    <dbReference type="NCBI Taxonomy" id="7955"/>
    <lineage>
        <taxon>Eukaryota</taxon>
        <taxon>Metazoa</taxon>
        <taxon>Chordata</taxon>
        <taxon>Craniata</taxon>
        <taxon>Vertebrata</taxon>
        <taxon>Euteleostomi</taxon>
        <taxon>Actinopterygii</taxon>
        <taxon>Neopterygii</taxon>
        <taxon>Teleostei</taxon>
        <taxon>Ostariophysi</taxon>
        <taxon>Cypriniformes</taxon>
        <taxon>Danionidae</taxon>
        <taxon>Danioninae</taxon>
        <taxon>Danio</taxon>
    </lineage>
</organism>
<protein>
    <recommendedName>
        <fullName>RNA-binding protein, mRNA-processing factor 2a</fullName>
        <shortName>rbpms2a</shortName>
    </recommendedName>
    <alternativeName>
        <fullName evidence="4">Heart and RRM expressed sequence</fullName>
        <shortName>hermes</shortName>
    </alternativeName>
    <alternativeName>
        <fullName evidence="10">Protein hermes A</fullName>
    </alternativeName>
</protein>
<sequence>MSLKSDSETNTSVSLEEEVRTLFVSGLPVDIKPRELYLLFRPFKGYEGSLIKLTSKQPVGFVTFDSRSGAEAAKNALNGIRFDPESPQTLRLEFAKANTKMAKSKLMATPNPSNLHPALGAHFIARDPYDLTGAALIPASPEAWAPYPLYTTELTPGLPHAAFTYPAAAAAAAALHAQMRWYPSPSESSQPGWKSRQFC</sequence>
<proteinExistence type="evidence at protein level"/>
<dbReference type="EMBL" id="BX296538">
    <property type="status" value="NOT_ANNOTATED_CDS"/>
    <property type="molecule type" value="Genomic_DNA"/>
</dbReference>
<dbReference type="EMBL" id="CU570688">
    <property type="status" value="NOT_ANNOTATED_CDS"/>
    <property type="molecule type" value="Genomic_DNA"/>
</dbReference>
<dbReference type="EMBL" id="BC076171">
    <property type="protein sequence ID" value="AAH76171.1"/>
    <property type="molecule type" value="mRNA"/>
</dbReference>
<dbReference type="EMBL" id="BC152178">
    <property type="protein sequence ID" value="AAI52179.1"/>
    <property type="molecule type" value="mRNA"/>
</dbReference>
<dbReference type="RefSeq" id="NP_001002409.1">
    <property type="nucleotide sequence ID" value="NM_001002409.1"/>
</dbReference>
<dbReference type="SMR" id="Q6DH13"/>
<dbReference type="FunCoup" id="Q6DH13">
    <property type="interactions" value="327"/>
</dbReference>
<dbReference type="STRING" id="7955.ENSDARP00000067513"/>
<dbReference type="PaxDb" id="7955-ENSDARP00000067513"/>
<dbReference type="Ensembl" id="ENSDART00000067514">
    <property type="protein sequence ID" value="ENSDARP00000067513"/>
    <property type="gene ID" value="ENSDARG00000045930"/>
</dbReference>
<dbReference type="Ensembl" id="ENSDART00000191824">
    <property type="protein sequence ID" value="ENSDARP00000151988"/>
    <property type="gene ID" value="ENSDARG00000045930"/>
</dbReference>
<dbReference type="GeneID" id="436682"/>
<dbReference type="KEGG" id="dre:436682"/>
<dbReference type="AGR" id="ZFIN:ZDB-GENE-040718-106"/>
<dbReference type="CTD" id="436682"/>
<dbReference type="ZFIN" id="ZDB-GENE-040718-106">
    <property type="gene designation" value="rbpms2a"/>
</dbReference>
<dbReference type="eggNOG" id="KOG1457">
    <property type="taxonomic scope" value="Eukaryota"/>
</dbReference>
<dbReference type="HOGENOM" id="CLU_099973_1_1_1"/>
<dbReference type="InParanoid" id="Q6DH13"/>
<dbReference type="OMA" id="AQQGWKY"/>
<dbReference type="OrthoDB" id="431169at2759"/>
<dbReference type="PhylomeDB" id="Q6DH13"/>
<dbReference type="TreeFam" id="TF351070"/>
<dbReference type="CD-CODE" id="DD98A56E">
    <property type="entry name" value="Balbiani body"/>
</dbReference>
<dbReference type="PRO" id="PR:Q6DH13"/>
<dbReference type="Proteomes" id="UP000000437">
    <property type="component" value="Chromosome 25"/>
</dbReference>
<dbReference type="Bgee" id="ENSDARG00000045930">
    <property type="expression patterns" value="Expressed in swim bladder and 32 other cell types or tissues"/>
</dbReference>
<dbReference type="GO" id="GO:0010494">
    <property type="term" value="C:cytoplasmic stress granule"/>
    <property type="evidence" value="ECO:0000250"/>
    <property type="project" value="UniProtKB"/>
</dbReference>
<dbReference type="GO" id="GO:0005829">
    <property type="term" value="C:cytosol"/>
    <property type="evidence" value="ECO:0000250"/>
    <property type="project" value="UniProtKB"/>
</dbReference>
<dbReference type="GO" id="GO:0005634">
    <property type="term" value="C:nucleus"/>
    <property type="evidence" value="ECO:0000250"/>
    <property type="project" value="UniProtKB"/>
</dbReference>
<dbReference type="GO" id="GO:0003729">
    <property type="term" value="F:mRNA binding"/>
    <property type="evidence" value="ECO:0000318"/>
    <property type="project" value="GO_Central"/>
</dbReference>
<dbReference type="GO" id="GO:0042803">
    <property type="term" value="F:protein homodimerization activity"/>
    <property type="evidence" value="ECO:0007669"/>
    <property type="project" value="InterPro"/>
</dbReference>
<dbReference type="GO" id="GO:0048813">
    <property type="term" value="P:dendrite morphogenesis"/>
    <property type="evidence" value="ECO:0000316"/>
    <property type="project" value="ZFIN"/>
</dbReference>
<dbReference type="GO" id="GO:0046660">
    <property type="term" value="P:female sex differentiation"/>
    <property type="evidence" value="ECO:0000315"/>
    <property type="project" value="ZFIN"/>
</dbReference>
<dbReference type="GO" id="GO:0060047">
    <property type="term" value="P:heart contraction"/>
    <property type="evidence" value="ECO:0000315"/>
    <property type="project" value="ZFIN"/>
</dbReference>
<dbReference type="GO" id="GO:0003007">
    <property type="term" value="P:heart morphogenesis"/>
    <property type="evidence" value="ECO:0000315"/>
    <property type="project" value="ZFIN"/>
</dbReference>
<dbReference type="GO" id="GO:0051151">
    <property type="term" value="P:negative regulation of smooth muscle cell differentiation"/>
    <property type="evidence" value="ECO:0000318"/>
    <property type="project" value="GO_Central"/>
</dbReference>
<dbReference type="GO" id="GO:0000381">
    <property type="term" value="P:regulation of alternative mRNA splicing, via spliceosome"/>
    <property type="evidence" value="ECO:0000250"/>
    <property type="project" value="UniProtKB"/>
</dbReference>
<dbReference type="GO" id="GO:0090259">
    <property type="term" value="P:regulation of retinal ganglion cell axon guidance"/>
    <property type="evidence" value="ECO:0000316"/>
    <property type="project" value="ZFIN"/>
</dbReference>
<dbReference type="GO" id="GO:0031290">
    <property type="term" value="P:retinal ganglion cell axon guidance"/>
    <property type="evidence" value="ECO:0000316"/>
    <property type="project" value="ZFIN"/>
</dbReference>
<dbReference type="CDD" id="cd12683">
    <property type="entry name" value="RRM_RBPMS2"/>
    <property type="match status" value="1"/>
</dbReference>
<dbReference type="FunFam" id="3.30.70.330:FF:000037">
    <property type="entry name" value="RNA-binding protein with multiple splicing 2"/>
    <property type="match status" value="1"/>
</dbReference>
<dbReference type="Gene3D" id="3.30.70.330">
    <property type="match status" value="1"/>
</dbReference>
<dbReference type="InterPro" id="IPR012677">
    <property type="entry name" value="Nucleotide-bd_a/b_plait_sf"/>
</dbReference>
<dbReference type="InterPro" id="IPR035979">
    <property type="entry name" value="RBD_domain_sf"/>
</dbReference>
<dbReference type="InterPro" id="IPR034787">
    <property type="entry name" value="RBPMS2_RRM"/>
</dbReference>
<dbReference type="InterPro" id="IPR000504">
    <property type="entry name" value="RRM_dom"/>
</dbReference>
<dbReference type="PANTHER" id="PTHR10501">
    <property type="entry name" value="U1 SMALL NUCLEAR RIBONUCLEOPROTEIN A/U2 SMALL NUCLEAR RIBONUCLEOPROTEIN B"/>
    <property type="match status" value="1"/>
</dbReference>
<dbReference type="Pfam" id="PF00076">
    <property type="entry name" value="RRM_1"/>
    <property type="match status" value="1"/>
</dbReference>
<dbReference type="SMART" id="SM00360">
    <property type="entry name" value="RRM"/>
    <property type="match status" value="1"/>
</dbReference>
<dbReference type="SUPFAM" id="SSF54928">
    <property type="entry name" value="RNA-binding domain, RBD"/>
    <property type="match status" value="1"/>
</dbReference>
<dbReference type="PROSITE" id="PS50102">
    <property type="entry name" value="RRM"/>
    <property type="match status" value="1"/>
</dbReference>
<evidence type="ECO:0000250" key="1">
    <source>
        <dbReference type="UniProtKB" id="B5DFF2"/>
    </source>
</evidence>
<evidence type="ECO:0000250" key="2">
    <source>
        <dbReference type="UniProtKB" id="Q6ZRY4"/>
    </source>
</evidence>
<evidence type="ECO:0000250" key="3">
    <source>
        <dbReference type="UniProtKB" id="Q9W6I1"/>
    </source>
</evidence>
<evidence type="ECO:0000250" key="4">
    <source>
        <dbReference type="UniProtKB" id="Q9YGP5"/>
    </source>
</evidence>
<evidence type="ECO:0000255" key="5">
    <source>
        <dbReference type="PROSITE-ProRule" id="PRU00176"/>
    </source>
</evidence>
<evidence type="ECO:0000269" key="6">
    <source>
    </source>
</evidence>
<evidence type="ECO:0000269" key="7">
    <source>
    </source>
</evidence>
<evidence type="ECO:0000269" key="8">
    <source>
    </source>
</evidence>
<evidence type="ECO:0000269" key="9">
    <source>
    </source>
</evidence>
<evidence type="ECO:0000303" key="10">
    <source>
    </source>
</evidence>
<evidence type="ECO:0000305" key="11">
    <source>
    </source>
</evidence>
<evidence type="ECO:0000312" key="12">
    <source>
        <dbReference type="EMBL" id="AAH76171.1"/>
    </source>
</evidence>
<evidence type="ECO:0000312" key="13">
    <source>
        <dbReference type="Proteomes" id="UP000000437"/>
    </source>
</evidence>
<evidence type="ECO:0000312" key="14">
    <source>
        <dbReference type="ZFIN" id="ZDB-GENE-040718-106"/>
    </source>
</evidence>
<accession>Q6DH13</accession>
<comment type="function">
    <text evidence="1 2 3 6 9 11">RNA-binding protein involved in the regulation of smooth muscle cell differentiation and proliferation in the gastrointestinal system (By similarity). RNA-binding protein localized in Balbiani body (electron-dense aggregates in the oocyte) and germ plasm during oogenesis, and may be required to maintain germ plasm mRNA translational repression (PubMed:18582455). Translational regulator during topographic map formation in the visual system (PubMed:27974617). Establishes oocyte polarity through interaction with Bucky ball (BUC) (Probable). Acts as a pre-mRNA alternative splicing regulator. Mediates ACTN1 and FLNB alternative splicing (By similarity). Likely binds to mRNA tandem CAC trinucleotide or CA dinucleotide motifs (By similarity).</text>
</comment>
<comment type="subunit">
    <text evidence="8">Interacts with Bucky ball (BUC); to mediate Balbiani body formation and oocyte polarity during early oogenesis.</text>
</comment>
<comment type="subcellular location">
    <subcellularLocation>
        <location evidence="6">Cytoplasm</location>
    </subcellularLocation>
    <subcellularLocation>
        <location evidence="2">Nucleus</location>
    </subcellularLocation>
    <subcellularLocation>
        <location evidence="2">Cytoplasm</location>
        <location evidence="2">Stress granule</location>
    </subcellularLocation>
    <text evidence="6">Localizes to the Balbiani body during oogenesis.</text>
</comment>
<comment type="developmental stage">
    <text evidence="7">Expressed exclusively in retinal ganglion cells during and after axogenesis.</text>
</comment>
<comment type="domain">
    <text evidence="2">The RNA recognition motif (RRM) domain mediates binding to tandem CAC trinucleotide motif separated by a variable spacer region present on single-stranded RNA. Can also bind to CA dinucleotide repeats.</text>
</comment>
<comment type="disruption phenotype">
    <text evidence="9">Knock-down leads to topographic missorting in the optic tract through the up-regulation of NRP1.</text>
</comment>
<gene>
    <name evidence="14" type="primary">rbpms2a</name>
    <name evidence="10" type="synonym">hermesa</name>
    <name evidence="12" type="ORF">zgc:92689</name>
</gene>